<sequence length="107" mass="12154">MKLSVVLALFIIFQLGAASLMRNWMFDFEKELEHDYDDSEIGFHNIHSLMARSRRGDKVKICGTKVLKMVMVMCGGECSSTNENIATECCEKMCTMEDITTKCCPSR</sequence>
<keyword id="KW-0165">Cleavage on pair of basic residues</keyword>
<keyword id="KW-1015">Disulfide bond</keyword>
<keyword id="KW-1185">Reference proteome</keyword>
<keyword id="KW-0964">Secreted</keyword>
<keyword id="KW-0732">Signal</keyword>
<reference key="1">
    <citation type="journal article" date="1998" name="Science">
        <title>Genome sequence of the nematode C. elegans: a platform for investigating biology.</title>
        <authorList>
            <consortium name="The C. elegans sequencing consortium"/>
        </authorList>
    </citation>
    <scope>NUCLEOTIDE SEQUENCE [LARGE SCALE GENOMIC DNA]</scope>
    <source>
        <strain>Bristol N2</strain>
    </source>
</reference>
<reference key="2">
    <citation type="journal article" date="1998" name="Genome Res.">
        <title>New insulin-like proteins with atypical disulfide bond pattern characterized in Caenorhabditis elegans by comparative sequence analysis and homology modeling.</title>
        <authorList>
            <person name="Duret L."/>
            <person name="Guex N."/>
            <person name="Peitsch M.C."/>
            <person name="Bairoch A."/>
        </authorList>
    </citation>
    <scope>SIMILARITY TO INSULIN</scope>
    <scope>3D-STRUCTURE MODELING</scope>
</reference>
<accession>Q09628</accession>
<feature type="signal peptide" evidence="1">
    <location>
        <begin position="1"/>
        <end position="19"/>
    </location>
</feature>
<feature type="propeptide" id="PRO_0000016220" evidence="1">
    <location>
        <begin position="20"/>
        <end position="55"/>
    </location>
</feature>
<feature type="chain" id="PRO_0000016221" description="Probable insulin-like peptide beta-type 3">
    <location>
        <begin position="56"/>
        <end position="107"/>
    </location>
</feature>
<feature type="disulfide bond" evidence="1">
    <location>
        <begin position="62"/>
        <end position="90"/>
    </location>
</feature>
<feature type="disulfide bond" evidence="1">
    <location>
        <begin position="74"/>
        <end position="103"/>
    </location>
</feature>
<feature type="disulfide bond" evidence="1">
    <location>
        <begin position="78"/>
        <end position="104"/>
    </location>
</feature>
<feature type="disulfide bond" evidence="1">
    <location>
        <begin position="89"/>
        <end position="94"/>
    </location>
</feature>
<organism>
    <name type="scientific">Caenorhabditis elegans</name>
    <dbReference type="NCBI Taxonomy" id="6239"/>
    <lineage>
        <taxon>Eukaryota</taxon>
        <taxon>Metazoa</taxon>
        <taxon>Ecdysozoa</taxon>
        <taxon>Nematoda</taxon>
        <taxon>Chromadorea</taxon>
        <taxon>Rhabditida</taxon>
        <taxon>Rhabditina</taxon>
        <taxon>Rhabditomorpha</taxon>
        <taxon>Rhabditoidea</taxon>
        <taxon>Rhabditidae</taxon>
        <taxon>Peloderinae</taxon>
        <taxon>Caenorhabditis</taxon>
    </lineage>
</organism>
<comment type="subcellular location">
    <subcellularLocation>
        <location evidence="2">Secreted</location>
    </subcellularLocation>
</comment>
<comment type="similarity">
    <text evidence="2">Belongs to the insulin family.</text>
</comment>
<protein>
    <recommendedName>
        <fullName>Probable insulin-like peptide beta-type 3</fullName>
    </recommendedName>
</protein>
<evidence type="ECO:0000255" key="1"/>
<evidence type="ECO:0000305" key="2"/>
<gene>
    <name type="primary">ins-3</name>
    <name type="ORF">ZK75.3</name>
</gene>
<dbReference type="EMBL" id="FO080104">
    <property type="protein sequence ID" value="CCD61236.1"/>
    <property type="molecule type" value="Genomic_DNA"/>
</dbReference>
<dbReference type="PIR" id="T27988">
    <property type="entry name" value="T27988"/>
</dbReference>
<dbReference type="RefSeq" id="NP_495195.1">
    <property type="nucleotide sequence ID" value="NM_062794.9"/>
</dbReference>
<dbReference type="SMR" id="Q09628"/>
<dbReference type="FunCoup" id="Q09628">
    <property type="interactions" value="1522"/>
</dbReference>
<dbReference type="STRING" id="6239.ZK75.3.1"/>
<dbReference type="PaxDb" id="6239-ZK75.3"/>
<dbReference type="EnsemblMetazoa" id="ZK75.3.1">
    <property type="protein sequence ID" value="ZK75.3.1"/>
    <property type="gene ID" value="WBGene00002086"/>
</dbReference>
<dbReference type="GeneID" id="191684"/>
<dbReference type="KEGG" id="cel:CELE_ZK75.3"/>
<dbReference type="UCSC" id="ZK75.3">
    <property type="organism name" value="c. elegans"/>
</dbReference>
<dbReference type="AGR" id="WB:WBGene00002086"/>
<dbReference type="CTD" id="191684"/>
<dbReference type="WormBase" id="ZK75.3">
    <property type="protein sequence ID" value="CE02102"/>
    <property type="gene ID" value="WBGene00002086"/>
    <property type="gene designation" value="ins-3"/>
</dbReference>
<dbReference type="eggNOG" id="ENOG502TIIX">
    <property type="taxonomic scope" value="Eukaryota"/>
</dbReference>
<dbReference type="HOGENOM" id="CLU_154797_1_0_1"/>
<dbReference type="InParanoid" id="Q09628"/>
<dbReference type="OMA" id="CCETMCT"/>
<dbReference type="OrthoDB" id="5783482at2759"/>
<dbReference type="PhylomeDB" id="Q09628"/>
<dbReference type="PRO" id="PR:Q09628"/>
<dbReference type="Proteomes" id="UP000001940">
    <property type="component" value="Chromosome II"/>
</dbReference>
<dbReference type="Bgee" id="WBGene00002086">
    <property type="expression patterns" value="Expressed in larva and 2 other cell types or tissues"/>
</dbReference>
<dbReference type="GO" id="GO:0005576">
    <property type="term" value="C:extracellular region"/>
    <property type="evidence" value="ECO:0007669"/>
    <property type="project" value="UniProtKB-SubCell"/>
</dbReference>
<dbReference type="GO" id="GO:0005179">
    <property type="term" value="F:hormone activity"/>
    <property type="evidence" value="ECO:0007669"/>
    <property type="project" value="InterPro"/>
</dbReference>
<dbReference type="GO" id="GO:0040024">
    <property type="term" value="P:dauer larval development"/>
    <property type="evidence" value="ECO:0000316"/>
    <property type="project" value="UniProtKB"/>
</dbReference>
<dbReference type="GO" id="GO:1905910">
    <property type="term" value="P:negative regulation of dauer entry"/>
    <property type="evidence" value="ECO:0000316"/>
    <property type="project" value="UniProtKB"/>
</dbReference>
<dbReference type="Gene3D" id="1.10.100.10">
    <property type="entry name" value="Insulin-like"/>
    <property type="match status" value="1"/>
</dbReference>
<dbReference type="InterPro" id="IPR052335">
    <property type="entry name" value="Insulin-like_regulatory"/>
</dbReference>
<dbReference type="InterPro" id="IPR036438">
    <property type="entry name" value="Insulin-like_sf"/>
</dbReference>
<dbReference type="InterPro" id="IPR022353">
    <property type="entry name" value="Insulin_CS"/>
</dbReference>
<dbReference type="InterPro" id="IPR003235">
    <property type="entry name" value="Nem_insulin-like_b-type"/>
</dbReference>
<dbReference type="PANTHER" id="PTHR33893:SF5">
    <property type="entry name" value="INSULIN RELATED-RELATED"/>
    <property type="match status" value="1"/>
</dbReference>
<dbReference type="PANTHER" id="PTHR33893">
    <property type="entry name" value="INSULIN RELATED-RELATED-RELATED"/>
    <property type="match status" value="1"/>
</dbReference>
<dbReference type="Pfam" id="PF03488">
    <property type="entry name" value="Ins_beta"/>
    <property type="match status" value="1"/>
</dbReference>
<dbReference type="SUPFAM" id="SSF56994">
    <property type="entry name" value="Insulin-like"/>
    <property type="match status" value="1"/>
</dbReference>
<dbReference type="PROSITE" id="PS00262">
    <property type="entry name" value="INSULIN"/>
    <property type="match status" value="1"/>
</dbReference>
<proteinExistence type="inferred from homology"/>
<name>ILB3_CAEEL</name>